<name>PFDA_METMP</name>
<sequence>MNEELQNQFMALDVYNQQVDKLKEELSNIDMMIMELLRSIESMEGLKSSKEILLPLGAGAFIKAEAQNPEKIVLSVGVDVLLEKNVDDVIVDFQKSVEELEKTKELVNNQIQKTNQEIVKLRSELEKRAAAIEQRSAQMKPKTN</sequence>
<dbReference type="EMBL" id="BX950229">
    <property type="protein sequence ID" value="CAF31026.1"/>
    <property type="molecule type" value="Genomic_DNA"/>
</dbReference>
<dbReference type="RefSeq" id="WP_011171414.1">
    <property type="nucleotide sequence ID" value="NC_005791.1"/>
</dbReference>
<dbReference type="SMR" id="Q6LX82"/>
<dbReference type="STRING" id="267377.MMP1470"/>
<dbReference type="EnsemblBacteria" id="CAF31026">
    <property type="protein sequence ID" value="CAF31026"/>
    <property type="gene ID" value="MMP1470"/>
</dbReference>
<dbReference type="GeneID" id="2761294"/>
<dbReference type="KEGG" id="mmp:MMP1470"/>
<dbReference type="PATRIC" id="fig|267377.15.peg.1506"/>
<dbReference type="eggNOG" id="arCOG01341">
    <property type="taxonomic scope" value="Archaea"/>
</dbReference>
<dbReference type="HOGENOM" id="CLU_091867_1_2_2"/>
<dbReference type="OrthoDB" id="10045at2157"/>
<dbReference type="Proteomes" id="UP000000590">
    <property type="component" value="Chromosome"/>
</dbReference>
<dbReference type="GO" id="GO:0005737">
    <property type="term" value="C:cytoplasm"/>
    <property type="evidence" value="ECO:0007669"/>
    <property type="project" value="UniProtKB-SubCell"/>
</dbReference>
<dbReference type="GO" id="GO:0016272">
    <property type="term" value="C:prefoldin complex"/>
    <property type="evidence" value="ECO:0007669"/>
    <property type="project" value="UniProtKB-UniRule"/>
</dbReference>
<dbReference type="GO" id="GO:0051082">
    <property type="term" value="F:unfolded protein binding"/>
    <property type="evidence" value="ECO:0007669"/>
    <property type="project" value="UniProtKB-UniRule"/>
</dbReference>
<dbReference type="GO" id="GO:0006457">
    <property type="term" value="P:protein folding"/>
    <property type="evidence" value="ECO:0007669"/>
    <property type="project" value="UniProtKB-UniRule"/>
</dbReference>
<dbReference type="CDD" id="cd23160">
    <property type="entry name" value="Prefoldin_alpha_GimC"/>
    <property type="match status" value="1"/>
</dbReference>
<dbReference type="Gene3D" id="1.10.287.370">
    <property type="match status" value="1"/>
</dbReference>
<dbReference type="HAMAP" id="MF_00308">
    <property type="entry name" value="PfdA"/>
    <property type="match status" value="1"/>
</dbReference>
<dbReference type="InterPro" id="IPR011599">
    <property type="entry name" value="PFD_alpha_archaea"/>
</dbReference>
<dbReference type="InterPro" id="IPR009053">
    <property type="entry name" value="Prefoldin"/>
</dbReference>
<dbReference type="InterPro" id="IPR004127">
    <property type="entry name" value="Prefoldin_subunit_alpha"/>
</dbReference>
<dbReference type="NCBIfam" id="TIGR00293">
    <property type="entry name" value="prefoldin subunit alpha"/>
    <property type="match status" value="1"/>
</dbReference>
<dbReference type="Pfam" id="PF02996">
    <property type="entry name" value="Prefoldin"/>
    <property type="match status" value="1"/>
</dbReference>
<dbReference type="SUPFAM" id="SSF46579">
    <property type="entry name" value="Prefoldin"/>
    <property type="match status" value="1"/>
</dbReference>
<organism>
    <name type="scientific">Methanococcus maripaludis (strain DSM 14266 / JCM 13030 / NBRC 101832 / S2 / LL)</name>
    <dbReference type="NCBI Taxonomy" id="267377"/>
    <lineage>
        <taxon>Archaea</taxon>
        <taxon>Methanobacteriati</taxon>
        <taxon>Methanobacteriota</taxon>
        <taxon>Methanomada group</taxon>
        <taxon>Methanococci</taxon>
        <taxon>Methanococcales</taxon>
        <taxon>Methanococcaceae</taxon>
        <taxon>Methanococcus</taxon>
    </lineage>
</organism>
<feature type="chain" id="PRO_0000153678" description="Prefoldin subunit alpha">
    <location>
        <begin position="1"/>
        <end position="144"/>
    </location>
</feature>
<gene>
    <name evidence="1" type="primary">pfdA</name>
    <name type="synonym">pdfA</name>
    <name type="ordered locus">MMP1470</name>
</gene>
<comment type="function">
    <text evidence="1">Molecular chaperone capable of stabilizing a range of proteins. Seems to fulfill an ATP-independent, HSP70-like function in archaeal de novo protein folding.</text>
</comment>
<comment type="subunit">
    <text evidence="1">Heterohexamer of two alpha and four beta subunits.</text>
</comment>
<comment type="subcellular location">
    <subcellularLocation>
        <location evidence="1">Cytoplasm</location>
    </subcellularLocation>
</comment>
<comment type="similarity">
    <text evidence="2">Belongs to the prefoldin subunit alpha family.</text>
</comment>
<protein>
    <recommendedName>
        <fullName evidence="1">Prefoldin subunit alpha</fullName>
    </recommendedName>
    <alternativeName>
        <fullName evidence="1">GimC subunit alpha</fullName>
    </alternativeName>
</protein>
<proteinExistence type="inferred from homology"/>
<keyword id="KW-0143">Chaperone</keyword>
<keyword id="KW-0963">Cytoplasm</keyword>
<keyword id="KW-1185">Reference proteome</keyword>
<reference key="1">
    <citation type="journal article" date="2004" name="J. Bacteriol.">
        <title>Complete genome sequence of the genetically tractable hydrogenotrophic methanogen Methanococcus maripaludis.</title>
        <authorList>
            <person name="Hendrickson E.L."/>
            <person name="Kaul R."/>
            <person name="Zhou Y."/>
            <person name="Bovee D."/>
            <person name="Chapman P."/>
            <person name="Chung J."/>
            <person name="Conway de Macario E."/>
            <person name="Dodsworth J.A."/>
            <person name="Gillett W."/>
            <person name="Graham D.E."/>
            <person name="Hackett M."/>
            <person name="Haydock A.K."/>
            <person name="Kang A."/>
            <person name="Land M.L."/>
            <person name="Levy R."/>
            <person name="Lie T.J."/>
            <person name="Major T.A."/>
            <person name="Moore B.C."/>
            <person name="Porat I."/>
            <person name="Palmeiri A."/>
            <person name="Rouse G."/>
            <person name="Saenphimmachak C."/>
            <person name="Soell D."/>
            <person name="Van Dien S."/>
            <person name="Wang T."/>
            <person name="Whitman W.B."/>
            <person name="Xia Q."/>
            <person name="Zhang Y."/>
            <person name="Larimer F.W."/>
            <person name="Olson M.V."/>
            <person name="Leigh J.A."/>
        </authorList>
    </citation>
    <scope>NUCLEOTIDE SEQUENCE [LARGE SCALE GENOMIC DNA]</scope>
    <source>
        <strain>DSM 14266 / JCM 13030 / NBRC 101832 / S2 / LL</strain>
    </source>
</reference>
<evidence type="ECO:0000255" key="1">
    <source>
        <dbReference type="HAMAP-Rule" id="MF_00308"/>
    </source>
</evidence>
<evidence type="ECO:0000305" key="2"/>
<accession>Q6LX82</accession>